<keyword id="KW-0031">Aminopeptidase</keyword>
<keyword id="KW-0963">Cytoplasm</keyword>
<keyword id="KW-0378">Hydrolase</keyword>
<keyword id="KW-0645">Protease</keyword>
<keyword id="KW-0720">Serine protease</keyword>
<organism>
    <name type="scientific">Streptococcus thermophilus (strain CNRZ 1066)</name>
    <dbReference type="NCBI Taxonomy" id="299768"/>
    <lineage>
        <taxon>Bacteria</taxon>
        <taxon>Bacillati</taxon>
        <taxon>Bacillota</taxon>
        <taxon>Bacilli</taxon>
        <taxon>Lactobacillales</taxon>
        <taxon>Streptococcaceae</taxon>
        <taxon>Streptococcus</taxon>
    </lineage>
</organism>
<feature type="chain" id="PRO_1000045495" description="Xaa-Pro dipeptidyl-peptidase">
    <location>
        <begin position="1"/>
        <end position="755"/>
    </location>
</feature>
<feature type="active site" description="Charge relay system" evidence="1">
    <location>
        <position position="348"/>
    </location>
</feature>
<feature type="active site" description="Charge relay system" evidence="1">
    <location>
        <position position="468"/>
    </location>
</feature>
<feature type="active site" description="Charge relay system" evidence="1">
    <location>
        <position position="498"/>
    </location>
</feature>
<sequence length="755" mass="85618">MKFNQFSYIPVSPETAYQELRSLGFEVSLDASAKANFESFVRKYFLFFEDTDLALKNWIADPETDLLSFFQSDRPLTAEVFGLVALQLLGFVPNVDFTDSVAFLEKMAFPIAFDGSLNNLHQLLATRTQSGNTLIDQLVAQDLIPISNDYVFFNGKSLATFDTNQLHREVVYVETPVDTDKDGLLDLVKVTILRPNVDFPVPAMMTASPYQQGTNEPSSDKLTHKMEGDLLVKPAGKISLSRPEIKAPEADLTPINPVTKAEERFAHTDTYTLNDYMLARGVASIYVSGVGTFNSEGFMTSGDYQQVLAYKAVIDWLNGRARAFTSRSRQHTITADWASGKVTTTGLSYLGTMSNALATTGVDGLEMVIAEAGISSWYDYYRENGLLVSPGGYPGEDLDTLTEFTYSRALLAGEYLRHQKDYEAYLNELSTDIDRKHGDYNQFWHDRNYVQFADRVKATVVFTHGSQDWNVKPINVYQMFRALPKSLEKHLFFHNGAHVYMNAWQSIDFRESMNALICQKLLGLDNGYTLPTVIWQNNQSEQTWEVLDNFGHDNGKHIQLGKSEASIANHYEEEIFAKYGKAYQSFKDDLFMDKANAITLDFELDQDIQINGRVHLELRVKSSTNRGLISAQVLEMGDKKYLAPIPAPKRMSLDNGRLFKEEALRELPFKQAKYRVITKGHLNLQNRKDLLSIENVTPNEWMTIGLDLQPTIYKLNKGDKLRLVLYTTDFEHTIRDNSDYEVTVDLSQSKMTLPY</sequence>
<evidence type="ECO:0000255" key="1">
    <source>
        <dbReference type="HAMAP-Rule" id="MF_00698"/>
    </source>
</evidence>
<protein>
    <recommendedName>
        <fullName evidence="1">Xaa-Pro dipeptidyl-peptidase</fullName>
        <ecNumber evidence="1">3.4.14.11</ecNumber>
    </recommendedName>
    <alternativeName>
        <fullName evidence="1">X-Pro dipeptidyl-peptidase</fullName>
    </alternativeName>
    <alternativeName>
        <fullName evidence="1">X-prolyl-dipeptidyl aminopeptidase</fullName>
        <shortName evidence="1">X-PDAP</shortName>
    </alternativeName>
</protein>
<comment type="function">
    <text evidence="1">Removes N-terminal dipeptides sequentially from polypeptides having unsubstituted N-termini provided that the penultimate residue is proline.</text>
</comment>
<comment type="catalytic activity">
    <reaction evidence="1">
        <text>Hydrolyzes Xaa-Pro-|- bonds to release unblocked, N-terminal dipeptides from substrates including Ala-Pro-|-p-nitroanilide and (sequentially) Tyr-Pro-|-Phe-Pro-|-Gly-Pro-|-Ile.</text>
        <dbReference type="EC" id="3.4.14.11"/>
    </reaction>
</comment>
<comment type="subunit">
    <text evidence="1">Homodimer.</text>
</comment>
<comment type="subcellular location">
    <subcellularLocation>
        <location evidence="1">Cytoplasm</location>
    </subcellularLocation>
</comment>
<comment type="similarity">
    <text evidence="1">Belongs to the peptidase S15 family.</text>
</comment>
<reference key="1">
    <citation type="journal article" date="2004" name="Nat. Biotechnol.">
        <title>Complete sequence and comparative genome analysis of the dairy bacterium Streptococcus thermophilus.</title>
        <authorList>
            <person name="Bolotin A."/>
            <person name="Quinquis B."/>
            <person name="Renault P."/>
            <person name="Sorokin A."/>
            <person name="Ehrlich S.D."/>
            <person name="Kulakauskas S."/>
            <person name="Lapidus A."/>
            <person name="Goltsman E."/>
            <person name="Mazur M."/>
            <person name="Pusch G.D."/>
            <person name="Fonstein M."/>
            <person name="Overbeek R."/>
            <person name="Kyprides N."/>
            <person name="Purnelle B."/>
            <person name="Prozzi D."/>
            <person name="Ngui K."/>
            <person name="Masuy D."/>
            <person name="Hancy F."/>
            <person name="Burteau S."/>
            <person name="Boutry M."/>
            <person name="Delcour J."/>
            <person name="Goffeau A."/>
            <person name="Hols P."/>
        </authorList>
    </citation>
    <scope>NUCLEOTIDE SEQUENCE [LARGE SCALE GENOMIC DNA]</scope>
    <source>
        <strain>CNRZ 1066</strain>
    </source>
</reference>
<gene>
    <name evidence="1" type="primary">pepX</name>
    <name type="ordered locus">str1672</name>
</gene>
<accession>Q5LYA9</accession>
<proteinExistence type="inferred from homology"/>
<name>PEPX_STRT1</name>
<dbReference type="EC" id="3.4.14.11" evidence="1"/>
<dbReference type="EMBL" id="CP000024">
    <property type="protein sequence ID" value="AAV63201.1"/>
    <property type="molecule type" value="Genomic_DNA"/>
</dbReference>
<dbReference type="RefSeq" id="WP_011227515.1">
    <property type="nucleotide sequence ID" value="NC_006449.1"/>
</dbReference>
<dbReference type="SMR" id="Q5LYA9"/>
<dbReference type="ESTHER" id="strtr-pepx">
    <property type="family name" value="Lactobacillus_peptidase"/>
</dbReference>
<dbReference type="MEROPS" id="S15.001"/>
<dbReference type="KEGG" id="stc:str1672"/>
<dbReference type="HOGENOM" id="CLU_011800_0_0_9"/>
<dbReference type="GO" id="GO:0005737">
    <property type="term" value="C:cytoplasm"/>
    <property type="evidence" value="ECO:0007669"/>
    <property type="project" value="UniProtKB-SubCell"/>
</dbReference>
<dbReference type="GO" id="GO:0004177">
    <property type="term" value="F:aminopeptidase activity"/>
    <property type="evidence" value="ECO:0007669"/>
    <property type="project" value="UniProtKB-KW"/>
</dbReference>
<dbReference type="GO" id="GO:0008239">
    <property type="term" value="F:dipeptidyl-peptidase activity"/>
    <property type="evidence" value="ECO:0007669"/>
    <property type="project" value="UniProtKB-UniRule"/>
</dbReference>
<dbReference type="GO" id="GO:0008236">
    <property type="term" value="F:serine-type peptidase activity"/>
    <property type="evidence" value="ECO:0007669"/>
    <property type="project" value="UniProtKB-KW"/>
</dbReference>
<dbReference type="GO" id="GO:0006508">
    <property type="term" value="P:proteolysis"/>
    <property type="evidence" value="ECO:0007669"/>
    <property type="project" value="UniProtKB-KW"/>
</dbReference>
<dbReference type="Gene3D" id="1.10.246.70">
    <property type="match status" value="1"/>
</dbReference>
<dbReference type="Gene3D" id="3.40.50.1820">
    <property type="entry name" value="alpha/beta hydrolase"/>
    <property type="match status" value="1"/>
</dbReference>
<dbReference type="Gene3D" id="2.60.120.260">
    <property type="entry name" value="Galactose-binding domain-like"/>
    <property type="match status" value="1"/>
</dbReference>
<dbReference type="HAMAP" id="MF_00698">
    <property type="entry name" value="Aminopeptidase_S15"/>
    <property type="match status" value="1"/>
</dbReference>
<dbReference type="InterPro" id="IPR029058">
    <property type="entry name" value="AB_hydrolase_fold"/>
</dbReference>
<dbReference type="InterPro" id="IPR008979">
    <property type="entry name" value="Galactose-bd-like_sf"/>
</dbReference>
<dbReference type="InterPro" id="IPR008252">
    <property type="entry name" value="Pept_S15_Xpro"/>
</dbReference>
<dbReference type="InterPro" id="IPR015251">
    <property type="entry name" value="PepX_N_dom"/>
</dbReference>
<dbReference type="InterPro" id="IPR036313">
    <property type="entry name" value="PepX_N_dom_sf"/>
</dbReference>
<dbReference type="InterPro" id="IPR000383">
    <property type="entry name" value="Xaa-Pro-like_dom"/>
</dbReference>
<dbReference type="InterPro" id="IPR013736">
    <property type="entry name" value="Xaa-Pro_dipept_C"/>
</dbReference>
<dbReference type="NCBIfam" id="NF003783">
    <property type="entry name" value="PRK05371.1-4"/>
    <property type="match status" value="1"/>
</dbReference>
<dbReference type="Pfam" id="PF02129">
    <property type="entry name" value="Peptidase_S15"/>
    <property type="match status" value="1"/>
</dbReference>
<dbReference type="Pfam" id="PF08530">
    <property type="entry name" value="PepX_C"/>
    <property type="match status" value="1"/>
</dbReference>
<dbReference type="Pfam" id="PF09168">
    <property type="entry name" value="PepX_N"/>
    <property type="match status" value="1"/>
</dbReference>
<dbReference type="PRINTS" id="PR00923">
    <property type="entry name" value="LACTOPTASE"/>
</dbReference>
<dbReference type="SMART" id="SM00939">
    <property type="entry name" value="PepX_C"/>
    <property type="match status" value="1"/>
</dbReference>
<dbReference type="SMART" id="SM00940">
    <property type="entry name" value="PepX_N"/>
    <property type="match status" value="1"/>
</dbReference>
<dbReference type="SUPFAM" id="SSF53474">
    <property type="entry name" value="alpha/beta-Hydrolases"/>
    <property type="match status" value="1"/>
</dbReference>
<dbReference type="SUPFAM" id="SSF49785">
    <property type="entry name" value="Galactose-binding domain-like"/>
    <property type="match status" value="1"/>
</dbReference>
<dbReference type="SUPFAM" id="SSF81761">
    <property type="entry name" value="X-Prolyl dipeptidyl aminopeptidase PepX, N-terminal domain"/>
    <property type="match status" value="1"/>
</dbReference>